<comment type="function">
    <text evidence="1">Core subunit of the mitochondrial membrane respiratory chain NADH dehydrogenase (Complex I) that is believed to belong to the minimal assembly required for catalysis. Complex I functions in the transfer of electrons from NADH to the respiratory chain. The immediate electron acceptor for the enzyme is believed to be ubiquinone (By similarity).</text>
</comment>
<comment type="catalytic activity">
    <reaction>
        <text>a ubiquinone + NADH + 5 H(+)(in) = a ubiquinol + NAD(+) + 4 H(+)(out)</text>
        <dbReference type="Rhea" id="RHEA:29091"/>
        <dbReference type="Rhea" id="RHEA-COMP:9565"/>
        <dbReference type="Rhea" id="RHEA-COMP:9566"/>
        <dbReference type="ChEBI" id="CHEBI:15378"/>
        <dbReference type="ChEBI" id="CHEBI:16389"/>
        <dbReference type="ChEBI" id="CHEBI:17976"/>
        <dbReference type="ChEBI" id="CHEBI:57540"/>
        <dbReference type="ChEBI" id="CHEBI:57945"/>
        <dbReference type="EC" id="7.1.1.2"/>
    </reaction>
</comment>
<comment type="subcellular location">
    <subcellularLocation>
        <location evidence="1">Mitochondrion inner membrane</location>
        <topology evidence="1">Multi-pass membrane protein</topology>
    </subcellularLocation>
</comment>
<comment type="similarity">
    <text evidence="3">Belongs to the complex I subunit 1 family.</text>
</comment>
<geneLocation type="mitochondrion"/>
<name>NU1M_DROYA</name>
<feature type="chain" id="PRO_0000117400" description="NADH-ubiquinone oxidoreductase chain 1">
    <location>
        <begin position="1"/>
        <end position="324"/>
    </location>
</feature>
<feature type="transmembrane region" description="Helical" evidence="2">
    <location>
        <begin position="3"/>
        <end position="23"/>
    </location>
</feature>
<feature type="transmembrane region" description="Helical" evidence="2">
    <location>
        <begin position="77"/>
        <end position="97"/>
    </location>
</feature>
<feature type="transmembrane region" description="Helical" evidence="2">
    <location>
        <begin position="104"/>
        <end position="124"/>
    </location>
</feature>
<feature type="transmembrane region" description="Helical" evidence="2">
    <location>
        <begin position="150"/>
        <end position="170"/>
    </location>
</feature>
<feature type="transmembrane region" description="Helical" evidence="2">
    <location>
        <begin position="174"/>
        <end position="194"/>
    </location>
</feature>
<feature type="transmembrane region" description="Helical" evidence="2">
    <location>
        <begin position="226"/>
        <end position="246"/>
    </location>
</feature>
<feature type="transmembrane region" description="Helical" evidence="2">
    <location>
        <begin position="250"/>
        <end position="270"/>
    </location>
</feature>
<feature type="transmembrane region" description="Helical" evidence="2">
    <location>
        <begin position="297"/>
        <end position="317"/>
    </location>
</feature>
<proteinExistence type="inferred from homology"/>
<sequence>MEFILSLIGSLLLIICVLVSVAFLTLLERKVLGYIQIRKGPNKVGLMGIPQPFCDAIKLFTKEQTYPLLSNYLSYYISPIFSLFLSLFVWMCMPFFVKLYSFNLGGLFFLCCTSLGVYTVMVAGWSSNSNYALLGGLRAVAQTISYEVSLALIMLSFIFLIGSYNMIYFFYYQIYMWFLIILFPMSLVWLTISLAETNRTPFDFAEGESELVSGFNVEYSSGGFALIFMAEYASILFMSMLFCVIFLGCDVFNLLFYVKLTFISFVFIWARGTLPRFRYDKLMYLAWKCFLSFSLNYLLFFIGFKILLFSFLLWIFFSKKLMEN</sequence>
<reference key="1">
    <citation type="journal article" date="1984" name="Nucleic Acids Res.">
        <title>Sequence and arrangement of the genes for cytochrome b, URF1, URF4L, URF4, URF5, URF6 and five tRNAs in Drosophila mitochondrial DNA.</title>
        <authorList>
            <person name="Clary D.O."/>
            <person name="Wahleithner J.A."/>
            <person name="Wolstenholme D.R."/>
        </authorList>
    </citation>
    <scope>NUCLEOTIDE SEQUENCE [GENOMIC DNA]</scope>
</reference>
<reference key="2">
    <citation type="journal article" date="1985" name="J. Mol. Evol.">
        <title>The mitochondrial DNA molecular of Drosophila yakuba: nucleotide sequence, gene organization, and genetic code.</title>
        <authorList>
            <person name="Clary D.O."/>
            <person name="Wolstenholme D.R."/>
        </authorList>
    </citation>
    <scope>NUCLEOTIDE SEQUENCE [LARGE SCALE GENOMIC DNA]</scope>
    <source>
        <strain>2317.6 Ivory Coast</strain>
    </source>
</reference>
<gene>
    <name type="primary">mt:ND1</name>
    <name type="synonym">ND1</name>
</gene>
<evidence type="ECO:0000250" key="1"/>
<evidence type="ECO:0000255" key="2"/>
<evidence type="ECO:0000305" key="3"/>
<organism>
    <name type="scientific">Drosophila yakuba</name>
    <name type="common">Fruit fly</name>
    <dbReference type="NCBI Taxonomy" id="7245"/>
    <lineage>
        <taxon>Eukaryota</taxon>
        <taxon>Metazoa</taxon>
        <taxon>Ecdysozoa</taxon>
        <taxon>Arthropoda</taxon>
        <taxon>Hexapoda</taxon>
        <taxon>Insecta</taxon>
        <taxon>Pterygota</taxon>
        <taxon>Neoptera</taxon>
        <taxon>Endopterygota</taxon>
        <taxon>Diptera</taxon>
        <taxon>Brachycera</taxon>
        <taxon>Muscomorpha</taxon>
        <taxon>Ephydroidea</taxon>
        <taxon>Drosophilidae</taxon>
        <taxon>Drosophila</taxon>
        <taxon>Sophophora</taxon>
    </lineage>
</organism>
<dbReference type="EC" id="7.1.1.2"/>
<dbReference type="EMBL" id="X03240">
    <property type="protein sequence ID" value="CAA26997.1"/>
    <property type="molecule type" value="Genomic_DNA"/>
</dbReference>
<dbReference type="PIR" id="D30020">
    <property type="entry name" value="D30020"/>
</dbReference>
<dbReference type="RefSeq" id="NP_006914.1">
    <property type="nucleotide sequence ID" value="NC_001322.1"/>
</dbReference>
<dbReference type="SMR" id="P07710"/>
<dbReference type="EnsemblMetazoa" id="GeneID_807627_df_mr">
    <property type="protein sequence ID" value="NP_006914.1"/>
    <property type="gene ID" value="GeneID_807627"/>
</dbReference>
<dbReference type="GeneID" id="807627"/>
<dbReference type="KEGG" id="dya:ND1"/>
<dbReference type="CTD" id="4535"/>
<dbReference type="FlyBase" id="FBgn0013183">
    <property type="gene designation" value="Dyak\mt:ND1"/>
</dbReference>
<dbReference type="OrthoDB" id="531329at2759"/>
<dbReference type="Proteomes" id="UP000002282">
    <property type="component" value="Mitochondrion"/>
</dbReference>
<dbReference type="GO" id="GO:0005743">
    <property type="term" value="C:mitochondrial inner membrane"/>
    <property type="evidence" value="ECO:0007669"/>
    <property type="project" value="UniProtKB-SubCell"/>
</dbReference>
<dbReference type="GO" id="GO:0045271">
    <property type="term" value="C:respiratory chain complex I"/>
    <property type="evidence" value="ECO:0007669"/>
    <property type="project" value="EnsemblMetazoa"/>
</dbReference>
<dbReference type="GO" id="GO:0008137">
    <property type="term" value="F:NADH dehydrogenase (ubiquinone) activity"/>
    <property type="evidence" value="ECO:0007669"/>
    <property type="project" value="UniProtKB-EC"/>
</dbReference>
<dbReference type="GO" id="GO:0009060">
    <property type="term" value="P:aerobic respiration"/>
    <property type="evidence" value="ECO:0007669"/>
    <property type="project" value="TreeGrafter"/>
</dbReference>
<dbReference type="HAMAP" id="MF_01350">
    <property type="entry name" value="NDH1_NuoH"/>
    <property type="match status" value="1"/>
</dbReference>
<dbReference type="InterPro" id="IPR001694">
    <property type="entry name" value="NADH_UbQ_OxRdtase_su1/FPO"/>
</dbReference>
<dbReference type="InterPro" id="IPR018086">
    <property type="entry name" value="NADH_UbQ_OxRdtase_su1_CS"/>
</dbReference>
<dbReference type="PANTHER" id="PTHR11432">
    <property type="entry name" value="NADH DEHYDROGENASE SUBUNIT 1"/>
    <property type="match status" value="1"/>
</dbReference>
<dbReference type="PANTHER" id="PTHR11432:SF3">
    <property type="entry name" value="NADH-UBIQUINONE OXIDOREDUCTASE CHAIN 1"/>
    <property type="match status" value="1"/>
</dbReference>
<dbReference type="Pfam" id="PF00146">
    <property type="entry name" value="NADHdh"/>
    <property type="match status" value="1"/>
</dbReference>
<dbReference type="PROSITE" id="PS00667">
    <property type="entry name" value="COMPLEX1_ND1_1"/>
    <property type="match status" value="1"/>
</dbReference>
<dbReference type="PROSITE" id="PS00668">
    <property type="entry name" value="COMPLEX1_ND1_2"/>
    <property type="match status" value="1"/>
</dbReference>
<accession>P07710</accession>
<protein>
    <recommendedName>
        <fullName>NADH-ubiquinone oxidoreductase chain 1</fullName>
        <ecNumber>7.1.1.2</ecNumber>
    </recommendedName>
    <alternativeName>
        <fullName>NADH dehydrogenase subunit 1</fullName>
    </alternativeName>
</protein>
<keyword id="KW-0249">Electron transport</keyword>
<keyword id="KW-0472">Membrane</keyword>
<keyword id="KW-0496">Mitochondrion</keyword>
<keyword id="KW-0999">Mitochondrion inner membrane</keyword>
<keyword id="KW-0520">NAD</keyword>
<keyword id="KW-0679">Respiratory chain</keyword>
<keyword id="KW-1278">Translocase</keyword>
<keyword id="KW-0812">Transmembrane</keyword>
<keyword id="KW-1133">Transmembrane helix</keyword>
<keyword id="KW-0813">Transport</keyword>
<keyword id="KW-0830">Ubiquinone</keyword>